<comment type="function">
    <text evidence="3">Peptidyl-prolyl cis/trans isomerase (PPIase) that acts as a key virulence factor by promoting host leukocyte transformation. Binds to and isomerizes specific phosphorylated Ser/Thr-Pro (pSer/Thr-Pro) motifs in a subset of proteins, resulting in conformational changes in the proteins. Promotes host leukocyte transformation by binding to phosphorylated host FBXW7, disrupting dimerization and promoting FBXW7 autoubiquitination and subsequent degradation. Degradation of host FBXW7, leads to stabilization of JUN, which promotes cell transformation.</text>
</comment>
<comment type="catalytic activity">
    <reaction evidence="3">
        <text>[protein]-peptidylproline (omega=180) = [protein]-peptidylproline (omega=0)</text>
        <dbReference type="Rhea" id="RHEA:16237"/>
        <dbReference type="Rhea" id="RHEA-COMP:10747"/>
        <dbReference type="Rhea" id="RHEA-COMP:10748"/>
        <dbReference type="ChEBI" id="CHEBI:83833"/>
        <dbReference type="ChEBI" id="CHEBI:83834"/>
        <dbReference type="EC" id="5.2.1.8"/>
    </reaction>
</comment>
<comment type="activity regulation">
    <text evidence="3">Directly inhibited by buparvaquone and juglone anti-parasite drugs. Inhibited at lesser degree by the non-quinone inhibitor dipentamethylene thiuram monosulphide (DTM).</text>
</comment>
<comment type="subunit">
    <text evidence="3">Interacts with host FBXW7; leading to FBXW7 autoubiquitination and subsequent degradation.</text>
</comment>
<comment type="subcellular location">
    <subcellularLocation>
        <location evidence="6">Secreted</location>
    </subcellularLocation>
    <subcellularLocation>
        <location evidence="3">Host cytoplasm</location>
    </subcellularLocation>
    <subcellularLocation>
        <location evidence="3">Host nucleus</location>
    </subcellularLocation>
</comment>
<comment type="miscellaneous">
    <text evidence="3">PIN1 harbors a single amino acid variation in a strain resistant to buparvaquone (AC P0DMT5).</text>
</comment>
<evidence type="ECO:0000255" key="1"/>
<evidence type="ECO:0000255" key="2">
    <source>
        <dbReference type="PROSITE-ProRule" id="PRU00278"/>
    </source>
</evidence>
<evidence type="ECO:0000269" key="3">
    <source>
    </source>
</evidence>
<evidence type="ECO:0000303" key="4">
    <source>
    </source>
</evidence>
<evidence type="ECO:0000305" key="5"/>
<evidence type="ECO:0000305" key="6">
    <source>
    </source>
</evidence>
<evidence type="ECO:0000312" key="7">
    <source>
        <dbReference type="EMBL" id="CAI73918.1"/>
    </source>
</evidence>
<evidence type="ECO:0000312" key="8">
    <source>
        <dbReference type="Proteomes" id="UP000001950"/>
    </source>
</evidence>
<accession>Q4UG71</accession>
<gene>
    <name type="primary">PIN1</name>
    <name evidence="7" type="ORF">TA18945</name>
</gene>
<protein>
    <recommendedName>
        <fullName evidence="5">Peptidyl-prolyl cis-trans isomerase NIMA-interacting 1</fullName>
        <shortName evidence="4">TaPIN1</shortName>
        <ecNumber evidence="3">5.2.1.8</ecNumber>
    </recommendedName>
    <alternativeName>
        <fullName>Peptidyl-prolyl cis-trans isomerase Pin1</fullName>
        <shortName>PPIase Pin1</shortName>
    </alternativeName>
    <alternativeName>
        <fullName>Rotamase Pin1</fullName>
    </alternativeName>
</protein>
<sequence>MIRNFLNFLWNNTSLRFLIINTIIFAMDKVRCAHLLLKHTGSRNPVNRNTGMAVTRTKEEAVSEMKGYLEMLRKSDNLDQEFRRLATAKSECSSARKGGDLGFFDRNTMQKPFTEASFKLEVNEISDLVETDSGVHLIYRIA</sequence>
<reference key="1">
    <citation type="journal article" date="2005" name="Science">
        <title>Genome of the host-cell transforming parasite Theileria annulata compared with T. parva.</title>
        <authorList>
            <person name="Pain A."/>
            <person name="Renauld H."/>
            <person name="Berriman M."/>
            <person name="Murphy L."/>
            <person name="Yeats C.A."/>
            <person name="Weir W."/>
            <person name="Kerhornou A."/>
            <person name="Aslett M."/>
            <person name="Bishop R."/>
            <person name="Bouchier C."/>
            <person name="Cochet M."/>
            <person name="Coulson R.M.R."/>
            <person name="Cronin A."/>
            <person name="de Villiers E.P."/>
            <person name="Fraser A."/>
            <person name="Fosker N."/>
            <person name="Gardner M."/>
            <person name="Goble A."/>
            <person name="Griffiths-Jones S."/>
            <person name="Harris D.E."/>
            <person name="Katzer F."/>
            <person name="Larke N."/>
            <person name="Lord A."/>
            <person name="Maser P."/>
            <person name="McKellar S."/>
            <person name="Mooney P."/>
            <person name="Morton F."/>
            <person name="Nene V."/>
            <person name="O'Neil S."/>
            <person name="Price C."/>
            <person name="Quail M.A."/>
            <person name="Rabbinowitsch E."/>
            <person name="Rawlings N.D."/>
            <person name="Rutter S."/>
            <person name="Saunders D."/>
            <person name="Seeger K."/>
            <person name="Shah T."/>
            <person name="Squares R."/>
            <person name="Squares S."/>
            <person name="Tivey A."/>
            <person name="Walker A.R."/>
            <person name="Woodward J."/>
            <person name="Dobbelaere D.A.E."/>
            <person name="Langsley G."/>
            <person name="Rajandream M.A."/>
            <person name="McKeever D."/>
            <person name="Shiels B."/>
            <person name="Tait A."/>
            <person name="Barrell B.G."/>
            <person name="Hall N."/>
        </authorList>
    </citation>
    <scope>NUCLEOTIDE SEQUENCE [LARGE SCALE GENOMIC DNA]</scope>
    <source>
        <strain evidence="8">Ankara</strain>
    </source>
</reference>
<reference key="2">
    <citation type="journal article" date="2015" name="Nature">
        <title>Theileria parasites secrete a prolyl isomerase to maintain host leukocyte transformation.</title>
        <authorList>
            <person name="Marsolier J."/>
            <person name="Perichon M."/>
            <person name="DeBarry J.D."/>
            <person name="Villoutreix B.O."/>
            <person name="Chluba J."/>
            <person name="Lopez T."/>
            <person name="Garrido C."/>
            <person name="Zhou X.Z."/>
            <person name="Lu K.P."/>
            <person name="Fritsch L."/>
            <person name="Ait-Si-Ali S."/>
            <person name="Mhadhbi M."/>
            <person name="Medjkane S."/>
            <person name="Weitzman J.B."/>
        </authorList>
    </citation>
    <scope>FUNCTION</scope>
    <scope>SUBCELLULAR LOCATION</scope>
    <scope>INTERACTION WITH HOST FBXW7</scope>
    <scope>CATALYTIC ACTIVITY</scope>
    <scope>ACTIVITY REGULATION</scope>
    <scope>MUTAGENESIS OF LYS-38 AND CYS-92</scope>
</reference>
<proteinExistence type="evidence at protein level"/>
<name>PIN1_THEAN</name>
<organism>
    <name type="scientific">Theileria annulata</name>
    <dbReference type="NCBI Taxonomy" id="5874"/>
    <lineage>
        <taxon>Eukaryota</taxon>
        <taxon>Sar</taxon>
        <taxon>Alveolata</taxon>
        <taxon>Apicomplexa</taxon>
        <taxon>Aconoidasida</taxon>
        <taxon>Piroplasmida</taxon>
        <taxon>Theileriidae</taxon>
        <taxon>Theileria</taxon>
    </lineage>
</organism>
<keyword id="KW-1035">Host cytoplasm</keyword>
<keyword id="KW-1048">Host nucleus</keyword>
<keyword id="KW-0413">Isomerase</keyword>
<keyword id="KW-0553">Oncogene</keyword>
<keyword id="KW-1185">Reference proteome</keyword>
<keyword id="KW-0697">Rotamase</keyword>
<keyword id="KW-0964">Secreted</keyword>
<keyword id="KW-0732">Signal</keyword>
<keyword id="KW-0843">Virulence</keyword>
<feature type="signal peptide" evidence="1">
    <location>
        <begin position="1"/>
        <end position="32"/>
    </location>
</feature>
<feature type="chain" id="PRO_0000432706" description="Peptidyl-prolyl cis-trans isomerase NIMA-interacting 1" evidence="1">
    <location>
        <begin position="33"/>
        <end position="142"/>
    </location>
</feature>
<feature type="domain" description="PpiC" evidence="2">
    <location>
        <begin position="34"/>
        <end position="142"/>
    </location>
</feature>
<feature type="mutagenesis site" description="Loss of peptidyl-prolyl cis/trans isomerase activity." evidence="3">
    <original>K</original>
    <variation>A</variation>
    <location>
        <position position="38"/>
    </location>
</feature>
<feature type="mutagenesis site" description="Loss of peptidyl-prolyl cis/trans isomerase activity." evidence="3">
    <original>C</original>
    <variation>A</variation>
    <location>
        <position position="92"/>
    </location>
</feature>
<dbReference type="EC" id="5.2.1.8" evidence="3"/>
<dbReference type="EMBL" id="CR940347">
    <property type="protein sequence ID" value="CAI73918.1"/>
    <property type="molecule type" value="Genomic_DNA"/>
</dbReference>
<dbReference type="RefSeq" id="XP_954595.1">
    <property type="nucleotide sequence ID" value="XM_949502.1"/>
</dbReference>
<dbReference type="SMR" id="Q4UG71"/>
<dbReference type="DIP" id="DIP-61527N"/>
<dbReference type="IntAct" id="Q4UG71">
    <property type="interactions" value="3"/>
</dbReference>
<dbReference type="STRING" id="5874.Q4UG71"/>
<dbReference type="GeneID" id="3863623"/>
<dbReference type="KEGG" id="tan:TA18945"/>
<dbReference type="VEuPathDB" id="PiroplasmaDB:TA18945"/>
<dbReference type="eggNOG" id="KOG3259">
    <property type="taxonomic scope" value="Eukaryota"/>
</dbReference>
<dbReference type="InParanoid" id="Q4UG71"/>
<dbReference type="OMA" id="CTSAQNG"/>
<dbReference type="OrthoDB" id="2530521at2759"/>
<dbReference type="Proteomes" id="UP000001950">
    <property type="component" value="Chromosome 1 part 1"/>
</dbReference>
<dbReference type="GO" id="GO:0005829">
    <property type="term" value="C:cytosol"/>
    <property type="evidence" value="ECO:0007669"/>
    <property type="project" value="TreeGrafter"/>
</dbReference>
<dbReference type="GO" id="GO:0005576">
    <property type="term" value="C:extracellular region"/>
    <property type="evidence" value="ECO:0007669"/>
    <property type="project" value="UniProtKB-SubCell"/>
</dbReference>
<dbReference type="GO" id="GO:0030430">
    <property type="term" value="C:host cell cytoplasm"/>
    <property type="evidence" value="ECO:0000314"/>
    <property type="project" value="UniProtKB"/>
</dbReference>
<dbReference type="GO" id="GO:0042025">
    <property type="term" value="C:host cell nucleus"/>
    <property type="evidence" value="ECO:0000314"/>
    <property type="project" value="UniProtKB"/>
</dbReference>
<dbReference type="GO" id="GO:0005634">
    <property type="term" value="C:nucleus"/>
    <property type="evidence" value="ECO:0007669"/>
    <property type="project" value="TreeGrafter"/>
</dbReference>
<dbReference type="GO" id="GO:0003755">
    <property type="term" value="F:peptidyl-prolyl cis-trans isomerase activity"/>
    <property type="evidence" value="ECO:0000314"/>
    <property type="project" value="UniProtKB"/>
</dbReference>
<dbReference type="GO" id="GO:0044003">
    <property type="term" value="P:symbiont-mediated perturbation of host process"/>
    <property type="evidence" value="ECO:0000314"/>
    <property type="project" value="UniProtKB"/>
</dbReference>
<dbReference type="FunFam" id="3.10.50.40:FF:000010">
    <property type="entry name" value="Peptidyl-prolyl cis-trans isomerase Pin1"/>
    <property type="match status" value="1"/>
</dbReference>
<dbReference type="Gene3D" id="3.10.50.40">
    <property type="match status" value="1"/>
</dbReference>
<dbReference type="InterPro" id="IPR046357">
    <property type="entry name" value="PPIase_dom_sf"/>
</dbReference>
<dbReference type="InterPro" id="IPR051370">
    <property type="entry name" value="PPIase_Pin1"/>
</dbReference>
<dbReference type="InterPro" id="IPR000297">
    <property type="entry name" value="PPIase_PpiC"/>
</dbReference>
<dbReference type="PANTHER" id="PTHR10657">
    <property type="entry name" value="PEPTIDYL-PROLYL CIS-TRANS ISOMERASE"/>
    <property type="match status" value="1"/>
</dbReference>
<dbReference type="PANTHER" id="PTHR10657:SF4">
    <property type="entry name" value="PEPTIDYL-PROLYL CIS-TRANS ISOMERASE-RELATED"/>
    <property type="match status" value="1"/>
</dbReference>
<dbReference type="Pfam" id="PF00639">
    <property type="entry name" value="Rotamase"/>
    <property type="match status" value="1"/>
</dbReference>
<dbReference type="SUPFAM" id="SSF54534">
    <property type="entry name" value="FKBP-like"/>
    <property type="match status" value="1"/>
</dbReference>
<dbReference type="PROSITE" id="PS50198">
    <property type="entry name" value="PPIC_PPIASE_2"/>
    <property type="match status" value="1"/>
</dbReference>